<reference key="1">
    <citation type="journal article" date="2001" name="Nucleic Acids Res.">
        <title>The Dictyostelium discoideum family of Rho-related proteins.</title>
        <authorList>
            <person name="Rivero F."/>
            <person name="Dislich H."/>
            <person name="Gloeckner G."/>
            <person name="Noegel A.A."/>
        </authorList>
    </citation>
    <scope>NUCLEOTIDE SEQUENCE [GENOMIC DNA]</scope>
    <source>
        <strain>AX4</strain>
    </source>
</reference>
<reference key="2">
    <citation type="journal article" date="2005" name="Nature">
        <title>The genome of the social amoeba Dictyostelium discoideum.</title>
        <authorList>
            <person name="Eichinger L."/>
            <person name="Pachebat J.A."/>
            <person name="Gloeckner G."/>
            <person name="Rajandream M.A."/>
            <person name="Sucgang R."/>
            <person name="Berriman M."/>
            <person name="Song J."/>
            <person name="Olsen R."/>
            <person name="Szafranski K."/>
            <person name="Xu Q."/>
            <person name="Tunggal B."/>
            <person name="Kummerfeld S."/>
            <person name="Madera M."/>
            <person name="Konfortov B.A."/>
            <person name="Rivero F."/>
            <person name="Bankier A.T."/>
            <person name="Lehmann R."/>
            <person name="Hamlin N."/>
            <person name="Davies R."/>
            <person name="Gaudet P."/>
            <person name="Fey P."/>
            <person name="Pilcher K."/>
            <person name="Chen G."/>
            <person name="Saunders D."/>
            <person name="Sodergren E.J."/>
            <person name="Davis P."/>
            <person name="Kerhornou A."/>
            <person name="Nie X."/>
            <person name="Hall N."/>
            <person name="Anjard C."/>
            <person name="Hemphill L."/>
            <person name="Bason N."/>
            <person name="Farbrother P."/>
            <person name="Desany B."/>
            <person name="Just E."/>
            <person name="Morio T."/>
            <person name="Rost R."/>
            <person name="Churcher C.M."/>
            <person name="Cooper J."/>
            <person name="Haydock S."/>
            <person name="van Driessche N."/>
            <person name="Cronin A."/>
            <person name="Goodhead I."/>
            <person name="Muzny D.M."/>
            <person name="Mourier T."/>
            <person name="Pain A."/>
            <person name="Lu M."/>
            <person name="Harper D."/>
            <person name="Lindsay R."/>
            <person name="Hauser H."/>
            <person name="James K.D."/>
            <person name="Quiles M."/>
            <person name="Madan Babu M."/>
            <person name="Saito T."/>
            <person name="Buchrieser C."/>
            <person name="Wardroper A."/>
            <person name="Felder M."/>
            <person name="Thangavelu M."/>
            <person name="Johnson D."/>
            <person name="Knights A."/>
            <person name="Loulseged H."/>
            <person name="Mungall K.L."/>
            <person name="Oliver K."/>
            <person name="Price C."/>
            <person name="Quail M.A."/>
            <person name="Urushihara H."/>
            <person name="Hernandez J."/>
            <person name="Rabbinowitsch E."/>
            <person name="Steffen D."/>
            <person name="Sanders M."/>
            <person name="Ma J."/>
            <person name="Kohara Y."/>
            <person name="Sharp S."/>
            <person name="Simmonds M.N."/>
            <person name="Spiegler S."/>
            <person name="Tivey A."/>
            <person name="Sugano S."/>
            <person name="White B."/>
            <person name="Walker D."/>
            <person name="Woodward J.R."/>
            <person name="Winckler T."/>
            <person name="Tanaka Y."/>
            <person name="Shaulsky G."/>
            <person name="Schleicher M."/>
            <person name="Weinstock G.M."/>
            <person name="Rosenthal A."/>
            <person name="Cox E.C."/>
            <person name="Chisholm R.L."/>
            <person name="Gibbs R.A."/>
            <person name="Loomis W.F."/>
            <person name="Platzer M."/>
            <person name="Kay R.R."/>
            <person name="Williams J.G."/>
            <person name="Dear P.H."/>
            <person name="Noegel A.A."/>
            <person name="Barrell B.G."/>
            <person name="Kuspa A."/>
        </authorList>
    </citation>
    <scope>NUCLEOTIDE SEQUENCE [LARGE SCALE GENOMIC DNA]</scope>
    <source>
        <strain>AX4</strain>
    </source>
</reference>
<reference key="3">
    <citation type="journal article" date="1993" name="Gene">
        <title>Cloning and characterization of seven novel Dictyostelium discoideum rac-related genes belonging to the rho family of GTPases.</title>
        <authorList>
            <person name="Bush J.M. IV"/>
            <person name="Franek K."/>
            <person name="Cardelli J.A."/>
        </authorList>
    </citation>
    <scope>NUCLEOTIDE SEQUENCE [MRNA] OF 11-179</scope>
    <source>
        <strain>AX3</strain>
    </source>
</reference>
<reference key="4">
    <citation type="journal article" date="2005" name="Mol. Biol. Cell">
        <title>Cellular distribution and functions of wild-type and constitutively activated Dictyostelium PakB.</title>
        <authorList>
            <person name="de la Roche M."/>
            <person name="Mahasneh A."/>
            <person name="Lee S.-F."/>
            <person name="Rivero F."/>
            <person name="Cote G.P."/>
        </authorList>
    </citation>
    <scope>INTERACTION WITH PAKB</scope>
</reference>
<keyword id="KW-0342">GTP-binding</keyword>
<keyword id="KW-0547">Nucleotide-binding</keyword>
<keyword id="KW-1185">Reference proteome</keyword>
<keyword id="KW-0677">Repeat</keyword>
<feature type="chain" id="PRO_0000198898" description="Rho-related protein racA">
    <location>
        <begin position="1"/>
        <end position="598"/>
    </location>
</feature>
<feature type="domain" description="BTB 1" evidence="3">
    <location>
        <begin position="239"/>
        <end position="344"/>
    </location>
</feature>
<feature type="domain" description="BTB 2" evidence="3">
    <location>
        <begin position="405"/>
        <end position="472"/>
    </location>
</feature>
<feature type="region of interest" description="Disordered" evidence="4">
    <location>
        <begin position="175"/>
        <end position="210"/>
    </location>
</feature>
<feature type="short sequence motif" description="Effector region" evidence="2">
    <location>
        <begin position="32"/>
        <end position="40"/>
    </location>
</feature>
<feature type="compositionally biased region" description="Low complexity" evidence="4">
    <location>
        <begin position="182"/>
        <end position="197"/>
    </location>
</feature>
<feature type="binding site" evidence="1">
    <location>
        <begin position="11"/>
        <end position="17"/>
    </location>
    <ligand>
        <name>GTP</name>
        <dbReference type="ChEBI" id="CHEBI:37565"/>
    </ligand>
</feature>
<feature type="binding site" evidence="1">
    <location>
        <begin position="57"/>
        <end position="61"/>
    </location>
    <ligand>
        <name>GTP</name>
        <dbReference type="ChEBI" id="CHEBI:37565"/>
    </ligand>
</feature>
<feature type="binding site" evidence="1">
    <location>
        <begin position="115"/>
        <end position="118"/>
    </location>
    <ligand>
        <name>GTP</name>
        <dbReference type="ChEBI" id="CHEBI:37565"/>
    </ligand>
</feature>
<name>RACA_DICDI</name>
<comment type="subunit">
    <text evidence="5">Interacts with pakB.</text>
</comment>
<comment type="similarity">
    <text evidence="6">In the N-terminal section; belongs to the small GTPase superfamily. Rho family.</text>
</comment>
<dbReference type="EMBL" id="L11591">
    <property type="protein sequence ID" value="AAC37387.1"/>
    <property type="molecule type" value="mRNA"/>
</dbReference>
<dbReference type="EMBL" id="AAFI02000089">
    <property type="protein sequence ID" value="EAL64033.1"/>
    <property type="molecule type" value="Genomic_DNA"/>
</dbReference>
<dbReference type="EMBL" id="AF310886">
    <property type="protein sequence ID" value="AAG45115.1"/>
    <property type="molecule type" value="Genomic_DNA"/>
</dbReference>
<dbReference type="RefSeq" id="XP_637561.1">
    <property type="nucleotide sequence ID" value="XM_632469.1"/>
</dbReference>
<dbReference type="SMR" id="P34147"/>
<dbReference type="FunCoup" id="P34147">
    <property type="interactions" value="24"/>
</dbReference>
<dbReference type="IntAct" id="P34147">
    <property type="interactions" value="1"/>
</dbReference>
<dbReference type="STRING" id="44689.P34147"/>
<dbReference type="PaxDb" id="44689-DDB0191173"/>
<dbReference type="EnsemblProtists" id="EAL64033">
    <property type="protein sequence ID" value="EAL64033"/>
    <property type="gene ID" value="DDB_G0286555"/>
</dbReference>
<dbReference type="GeneID" id="8625701"/>
<dbReference type="KEGG" id="ddi:DDB_G0286555"/>
<dbReference type="dictyBase" id="DDB_G0286555">
    <property type="gene designation" value="racA"/>
</dbReference>
<dbReference type="VEuPathDB" id="AmoebaDB:DDB_G0286555"/>
<dbReference type="eggNOG" id="KOG0393">
    <property type="taxonomic scope" value="Eukaryota"/>
</dbReference>
<dbReference type="HOGENOM" id="CLU_029897_0_0_1"/>
<dbReference type="InParanoid" id="P34147"/>
<dbReference type="OMA" id="TIDKDCN"/>
<dbReference type="PhylomeDB" id="P34147"/>
<dbReference type="PRO" id="PR:P34147"/>
<dbReference type="Proteomes" id="UP000002195">
    <property type="component" value="Chromosome 4"/>
</dbReference>
<dbReference type="GO" id="GO:0042995">
    <property type="term" value="C:cell projection"/>
    <property type="evidence" value="ECO:0000318"/>
    <property type="project" value="GO_Central"/>
</dbReference>
<dbReference type="GO" id="GO:0031410">
    <property type="term" value="C:cytoplasmic vesicle"/>
    <property type="evidence" value="ECO:0000318"/>
    <property type="project" value="GO_Central"/>
</dbReference>
<dbReference type="GO" id="GO:0005856">
    <property type="term" value="C:cytoskeleton"/>
    <property type="evidence" value="ECO:0000318"/>
    <property type="project" value="GO_Central"/>
</dbReference>
<dbReference type="GO" id="GO:0005886">
    <property type="term" value="C:plasma membrane"/>
    <property type="evidence" value="ECO:0000318"/>
    <property type="project" value="GO_Central"/>
</dbReference>
<dbReference type="GO" id="GO:0005525">
    <property type="term" value="F:GTP binding"/>
    <property type="evidence" value="ECO:0000318"/>
    <property type="project" value="GO_Central"/>
</dbReference>
<dbReference type="GO" id="GO:0003924">
    <property type="term" value="F:GTPase activity"/>
    <property type="evidence" value="ECO:0000318"/>
    <property type="project" value="GO_Central"/>
</dbReference>
<dbReference type="GO" id="GO:0019901">
    <property type="term" value="F:protein kinase binding"/>
    <property type="evidence" value="ECO:0000353"/>
    <property type="project" value="dictyBase"/>
</dbReference>
<dbReference type="GO" id="GO:0007015">
    <property type="term" value="P:actin filament organization"/>
    <property type="evidence" value="ECO:0000318"/>
    <property type="project" value="GO_Central"/>
</dbReference>
<dbReference type="GO" id="GO:0030865">
    <property type="term" value="P:cortical cytoskeleton organization"/>
    <property type="evidence" value="ECO:0000318"/>
    <property type="project" value="GO_Central"/>
</dbReference>
<dbReference type="GO" id="GO:0007163">
    <property type="term" value="P:establishment or maintenance of cell polarity"/>
    <property type="evidence" value="ECO:0000318"/>
    <property type="project" value="GO_Central"/>
</dbReference>
<dbReference type="GO" id="GO:0000281">
    <property type="term" value="P:mitotic cytokinesis"/>
    <property type="evidence" value="ECO:0000318"/>
    <property type="project" value="GO_Central"/>
</dbReference>
<dbReference type="GO" id="GO:0032956">
    <property type="term" value="P:regulation of actin cytoskeleton organization"/>
    <property type="evidence" value="ECO:0000318"/>
    <property type="project" value="GO_Central"/>
</dbReference>
<dbReference type="GO" id="GO:0008360">
    <property type="term" value="P:regulation of cell shape"/>
    <property type="evidence" value="ECO:0000318"/>
    <property type="project" value="GO_Central"/>
</dbReference>
<dbReference type="GO" id="GO:0009617">
    <property type="term" value="P:response to bacterium"/>
    <property type="evidence" value="ECO:0007007"/>
    <property type="project" value="dictyBase"/>
</dbReference>
<dbReference type="GO" id="GO:0007165">
    <property type="term" value="P:signal transduction"/>
    <property type="evidence" value="ECO:0000318"/>
    <property type="project" value="GO_Central"/>
</dbReference>
<dbReference type="GO" id="GO:0007264">
    <property type="term" value="P:small GTPase-mediated signal transduction"/>
    <property type="evidence" value="ECO:0007669"/>
    <property type="project" value="InterPro"/>
</dbReference>
<dbReference type="CDD" id="cd18499">
    <property type="entry name" value="BACK_RHOBTB"/>
    <property type="match status" value="1"/>
</dbReference>
<dbReference type="CDD" id="cd18299">
    <property type="entry name" value="BTB1_POZ_RhoBTB"/>
    <property type="match status" value="1"/>
</dbReference>
<dbReference type="CDD" id="cd00157">
    <property type="entry name" value="Rho"/>
    <property type="match status" value="1"/>
</dbReference>
<dbReference type="FunFam" id="3.30.710.10:FF:000202">
    <property type="entry name" value="Predicted protein"/>
    <property type="match status" value="1"/>
</dbReference>
<dbReference type="FunFam" id="3.40.50.300:FF:000118">
    <property type="entry name" value="Rho-related GTP-binding protein RhoG"/>
    <property type="match status" value="1"/>
</dbReference>
<dbReference type="Gene3D" id="3.40.50.300">
    <property type="entry name" value="P-loop containing nucleotide triphosphate hydrolases"/>
    <property type="match status" value="1"/>
</dbReference>
<dbReference type="Gene3D" id="3.30.710.10">
    <property type="entry name" value="Potassium Channel Kv1.1, Chain A"/>
    <property type="match status" value="2"/>
</dbReference>
<dbReference type="InterPro" id="IPR000210">
    <property type="entry name" value="BTB/POZ_dom"/>
</dbReference>
<dbReference type="InterPro" id="IPR027417">
    <property type="entry name" value="P-loop_NTPase"/>
</dbReference>
<dbReference type="InterPro" id="IPR011333">
    <property type="entry name" value="SKP1/BTB/POZ_sf"/>
</dbReference>
<dbReference type="InterPro" id="IPR005225">
    <property type="entry name" value="Small_GTP-bd"/>
</dbReference>
<dbReference type="InterPro" id="IPR001806">
    <property type="entry name" value="Small_GTPase"/>
</dbReference>
<dbReference type="InterPro" id="IPR003578">
    <property type="entry name" value="Small_GTPase_Rho"/>
</dbReference>
<dbReference type="NCBIfam" id="TIGR00231">
    <property type="entry name" value="small_GTP"/>
    <property type="match status" value="1"/>
</dbReference>
<dbReference type="PANTHER" id="PTHR24072">
    <property type="entry name" value="RHO FAMILY GTPASE"/>
    <property type="match status" value="1"/>
</dbReference>
<dbReference type="Pfam" id="PF00651">
    <property type="entry name" value="BTB"/>
    <property type="match status" value="2"/>
</dbReference>
<dbReference type="Pfam" id="PF00071">
    <property type="entry name" value="Ras"/>
    <property type="match status" value="1"/>
</dbReference>
<dbReference type="PRINTS" id="PR00449">
    <property type="entry name" value="RASTRNSFRMNG"/>
</dbReference>
<dbReference type="SMART" id="SM00225">
    <property type="entry name" value="BTB"/>
    <property type="match status" value="2"/>
</dbReference>
<dbReference type="SMART" id="SM00175">
    <property type="entry name" value="RAB"/>
    <property type="match status" value="1"/>
</dbReference>
<dbReference type="SMART" id="SM00176">
    <property type="entry name" value="RAN"/>
    <property type="match status" value="1"/>
</dbReference>
<dbReference type="SMART" id="SM00173">
    <property type="entry name" value="RAS"/>
    <property type="match status" value="1"/>
</dbReference>
<dbReference type="SMART" id="SM00174">
    <property type="entry name" value="RHO"/>
    <property type="match status" value="1"/>
</dbReference>
<dbReference type="SUPFAM" id="SSF52540">
    <property type="entry name" value="P-loop containing nucleoside triphosphate hydrolases"/>
    <property type="match status" value="1"/>
</dbReference>
<dbReference type="SUPFAM" id="SSF54695">
    <property type="entry name" value="POZ domain"/>
    <property type="match status" value="2"/>
</dbReference>
<dbReference type="PROSITE" id="PS50097">
    <property type="entry name" value="BTB"/>
    <property type="match status" value="2"/>
</dbReference>
<dbReference type="PROSITE" id="PS51420">
    <property type="entry name" value="RHO"/>
    <property type="match status" value="1"/>
</dbReference>
<evidence type="ECO:0000250" key="1"/>
<evidence type="ECO:0000255" key="2"/>
<evidence type="ECO:0000255" key="3">
    <source>
        <dbReference type="PROSITE-ProRule" id="PRU00037"/>
    </source>
</evidence>
<evidence type="ECO:0000256" key="4">
    <source>
        <dbReference type="SAM" id="MobiDB-lite"/>
    </source>
</evidence>
<evidence type="ECO:0000269" key="5">
    <source>
    </source>
</evidence>
<evidence type="ECO:0000305" key="6"/>
<sequence>MQAIKLVVVGDGAVGKSCLLIAYTTNAFPGEYVPTVFDNYSANVMIDGKPFNLGLWDTAGQEDYDRLRPLSYPQTDVFLICFSIVSRASFENIRAKWYPEILHHAPNIPIVLVGTKNDLRGHHDLKRPEVSAAEANNLVRELGFSGYVETSALLQTNLRELFSLAIRTATSPKSASAKKKGGFFSSSSSSSSSSSSKSSEKSVPIPPVMPPAGKAPWIDIITSSYDKEMRETLNSESFSDVKFTFFEERPVYAHRVILCSASEFFRRVFGYTLSSDQAEFKLDDLNEGKVKNIRSVTIKPNEKNDDGTKSSGEFVEISIDSSINRRVFNRFIEFLYTGVLNYLDKNDQLQETIALAESVGFKYLASACKNVLGGNEDLNPSIGTFLNDQLGETSKELFFTKKILSDIQFIVEGRSIFAHKALIFSRSNVVNALIGRNFIEREGKVEMSDDVTFDSFMAILEYLYTAHAPIEEGDSVGILVLGNRFDLRRLVSLCELYISKEIERATTIGIFRSELDIIGLLICAQRHNAPQLEKFCLHFISSNYQPMRRRKEFALLDDKTKKHIEDNQWPPIHYLRAVEDYEKEMEKLKSSSKGWFKK</sequence>
<organism>
    <name type="scientific">Dictyostelium discoideum</name>
    <name type="common">Social amoeba</name>
    <dbReference type="NCBI Taxonomy" id="44689"/>
    <lineage>
        <taxon>Eukaryota</taxon>
        <taxon>Amoebozoa</taxon>
        <taxon>Evosea</taxon>
        <taxon>Eumycetozoa</taxon>
        <taxon>Dictyostelia</taxon>
        <taxon>Dictyosteliales</taxon>
        <taxon>Dictyosteliaceae</taxon>
        <taxon>Dictyostelium</taxon>
    </lineage>
</organism>
<protein>
    <recommendedName>
        <fullName>Rho-related protein racA</fullName>
    </recommendedName>
</protein>
<proteinExistence type="evidence at protein level"/>
<accession>P34147</accession>
<accession>Q54LK0</accession>
<accession>Q9GPT3</accession>
<gene>
    <name type="primary">racA</name>
    <name type="ORF">DDB_G0286555</name>
</gene>